<evidence type="ECO:0000255" key="1">
    <source>
        <dbReference type="HAMAP-Rule" id="MF_00079"/>
    </source>
</evidence>
<gene>
    <name evidence="1" type="primary">hisG</name>
    <name type="ordered locus">KRH_11740</name>
</gene>
<reference key="1">
    <citation type="journal article" date="2008" name="J. Bacteriol.">
        <title>Complete genome sequence of the soil actinomycete Kocuria rhizophila.</title>
        <authorList>
            <person name="Takarada H."/>
            <person name="Sekine M."/>
            <person name="Kosugi H."/>
            <person name="Matsuo Y."/>
            <person name="Fujisawa T."/>
            <person name="Omata S."/>
            <person name="Kishi E."/>
            <person name="Shimizu A."/>
            <person name="Tsukatani N."/>
            <person name="Tanikawa S."/>
            <person name="Fujita N."/>
            <person name="Harayama S."/>
        </authorList>
    </citation>
    <scope>NUCLEOTIDE SEQUENCE [LARGE SCALE GENOMIC DNA]</scope>
    <source>
        <strain>ATCC 9341 / DSM 348 / NBRC 103217 / DC2201</strain>
    </source>
</reference>
<protein>
    <recommendedName>
        <fullName evidence="1">ATP phosphoribosyltransferase</fullName>
        <shortName evidence="1">ATP-PRT</shortName>
        <shortName evidence="1">ATP-PRTase</shortName>
        <ecNumber evidence="1">2.4.2.17</ecNumber>
    </recommendedName>
</protein>
<organism>
    <name type="scientific">Kocuria rhizophila (strain ATCC 9341 / DSM 348 / NBRC 103217 / DC2201)</name>
    <dbReference type="NCBI Taxonomy" id="378753"/>
    <lineage>
        <taxon>Bacteria</taxon>
        <taxon>Bacillati</taxon>
        <taxon>Actinomycetota</taxon>
        <taxon>Actinomycetes</taxon>
        <taxon>Micrococcales</taxon>
        <taxon>Micrococcaceae</taxon>
        <taxon>Kocuria</taxon>
    </lineage>
</organism>
<keyword id="KW-0028">Amino-acid biosynthesis</keyword>
<keyword id="KW-0067">ATP-binding</keyword>
<keyword id="KW-0963">Cytoplasm</keyword>
<keyword id="KW-0328">Glycosyltransferase</keyword>
<keyword id="KW-0368">Histidine biosynthesis</keyword>
<keyword id="KW-0460">Magnesium</keyword>
<keyword id="KW-0479">Metal-binding</keyword>
<keyword id="KW-0547">Nucleotide-binding</keyword>
<keyword id="KW-1185">Reference proteome</keyword>
<keyword id="KW-0808">Transferase</keyword>
<feature type="chain" id="PRO_1000092736" description="ATP phosphoribosyltransferase">
    <location>
        <begin position="1"/>
        <end position="281"/>
    </location>
</feature>
<proteinExistence type="inferred from homology"/>
<comment type="function">
    <text evidence="1">Catalyzes the condensation of ATP and 5-phosphoribose 1-diphosphate to form N'-(5'-phosphoribosyl)-ATP (PR-ATP). Has a crucial role in the pathway because the rate of histidine biosynthesis seems to be controlled primarily by regulation of HisG enzymatic activity.</text>
</comment>
<comment type="catalytic activity">
    <reaction evidence="1">
        <text>1-(5-phospho-beta-D-ribosyl)-ATP + diphosphate = 5-phospho-alpha-D-ribose 1-diphosphate + ATP</text>
        <dbReference type="Rhea" id="RHEA:18473"/>
        <dbReference type="ChEBI" id="CHEBI:30616"/>
        <dbReference type="ChEBI" id="CHEBI:33019"/>
        <dbReference type="ChEBI" id="CHEBI:58017"/>
        <dbReference type="ChEBI" id="CHEBI:73183"/>
        <dbReference type="EC" id="2.4.2.17"/>
    </reaction>
</comment>
<comment type="cofactor">
    <cofactor evidence="1">
        <name>Mg(2+)</name>
        <dbReference type="ChEBI" id="CHEBI:18420"/>
    </cofactor>
</comment>
<comment type="activity regulation">
    <text evidence="1">Feedback inhibited by histidine.</text>
</comment>
<comment type="pathway">
    <text evidence="1">Amino-acid biosynthesis; L-histidine biosynthesis; L-histidine from 5-phospho-alpha-D-ribose 1-diphosphate: step 1/9.</text>
</comment>
<comment type="subcellular location">
    <subcellularLocation>
        <location evidence="1">Cytoplasm</location>
    </subcellularLocation>
</comment>
<comment type="similarity">
    <text evidence="1">Belongs to the ATP phosphoribosyltransferase family. Long subfamily.</text>
</comment>
<sequence>MLRVAVPNKGALSESAITMLTEAGYRQRRSSRELVLVDNDNGVEFFYLRPRDIAIYVGGGTLDLGITGRDLLLDSGAEAAEELCLDFARSTFRLAGPLGQFSSVQDLQGKRIATSYQVLLERHLAEQGVDAEVVRLDGAVESSIRLGVADAIADVVETGNTLRAAGLEIFDEPIMTSEALLIRRGDEPEPEGLSVLRRRLQGVLVARQYVMMDYDIREELLPAATEITPGMEGPTISPLGRDGAVAVRSMVRKADTNKVMDALYEVGARAILVSPIQAARI</sequence>
<dbReference type="EC" id="2.4.2.17" evidence="1"/>
<dbReference type="EMBL" id="AP009152">
    <property type="protein sequence ID" value="BAG29521.1"/>
    <property type="molecule type" value="Genomic_DNA"/>
</dbReference>
<dbReference type="RefSeq" id="WP_012398242.1">
    <property type="nucleotide sequence ID" value="NC_010617.1"/>
</dbReference>
<dbReference type="SMR" id="B2GGU8"/>
<dbReference type="STRING" id="378753.KRH_11740"/>
<dbReference type="KEGG" id="krh:KRH_11740"/>
<dbReference type="eggNOG" id="COG0040">
    <property type="taxonomic scope" value="Bacteria"/>
</dbReference>
<dbReference type="HOGENOM" id="CLU_038115_1_1_11"/>
<dbReference type="OrthoDB" id="9801867at2"/>
<dbReference type="UniPathway" id="UPA00031">
    <property type="reaction ID" value="UER00006"/>
</dbReference>
<dbReference type="Proteomes" id="UP000008838">
    <property type="component" value="Chromosome"/>
</dbReference>
<dbReference type="GO" id="GO:0005737">
    <property type="term" value="C:cytoplasm"/>
    <property type="evidence" value="ECO:0007669"/>
    <property type="project" value="UniProtKB-SubCell"/>
</dbReference>
<dbReference type="GO" id="GO:0005524">
    <property type="term" value="F:ATP binding"/>
    <property type="evidence" value="ECO:0007669"/>
    <property type="project" value="UniProtKB-KW"/>
</dbReference>
<dbReference type="GO" id="GO:0003879">
    <property type="term" value="F:ATP phosphoribosyltransferase activity"/>
    <property type="evidence" value="ECO:0007669"/>
    <property type="project" value="UniProtKB-UniRule"/>
</dbReference>
<dbReference type="GO" id="GO:0000287">
    <property type="term" value="F:magnesium ion binding"/>
    <property type="evidence" value="ECO:0007669"/>
    <property type="project" value="UniProtKB-UniRule"/>
</dbReference>
<dbReference type="GO" id="GO:0000105">
    <property type="term" value="P:L-histidine biosynthetic process"/>
    <property type="evidence" value="ECO:0007669"/>
    <property type="project" value="UniProtKB-UniRule"/>
</dbReference>
<dbReference type="CDD" id="cd13591">
    <property type="entry name" value="PBP2_HisGL1"/>
    <property type="match status" value="1"/>
</dbReference>
<dbReference type="Gene3D" id="3.30.70.120">
    <property type="match status" value="1"/>
</dbReference>
<dbReference type="Gene3D" id="3.40.190.10">
    <property type="entry name" value="Periplasmic binding protein-like II"/>
    <property type="match status" value="2"/>
</dbReference>
<dbReference type="HAMAP" id="MF_00079">
    <property type="entry name" value="HisG_Long"/>
    <property type="match status" value="1"/>
</dbReference>
<dbReference type="InterPro" id="IPR020621">
    <property type="entry name" value="ATP-PRT_HisG_long"/>
</dbReference>
<dbReference type="InterPro" id="IPR013820">
    <property type="entry name" value="ATP_PRibTrfase_cat"/>
</dbReference>
<dbReference type="InterPro" id="IPR018198">
    <property type="entry name" value="ATP_PRibTrfase_CS"/>
</dbReference>
<dbReference type="InterPro" id="IPR001348">
    <property type="entry name" value="ATP_PRibTrfase_HisG"/>
</dbReference>
<dbReference type="InterPro" id="IPR013115">
    <property type="entry name" value="HisG_C"/>
</dbReference>
<dbReference type="InterPro" id="IPR011322">
    <property type="entry name" value="N-reg_PII-like_a/b"/>
</dbReference>
<dbReference type="InterPro" id="IPR015867">
    <property type="entry name" value="N-reg_PII/ATP_PRibTrfase_C"/>
</dbReference>
<dbReference type="NCBIfam" id="TIGR00070">
    <property type="entry name" value="hisG"/>
    <property type="match status" value="1"/>
</dbReference>
<dbReference type="NCBIfam" id="TIGR03455">
    <property type="entry name" value="HisG_C-term"/>
    <property type="match status" value="1"/>
</dbReference>
<dbReference type="PANTHER" id="PTHR21403:SF8">
    <property type="entry name" value="ATP PHOSPHORIBOSYLTRANSFERASE"/>
    <property type="match status" value="1"/>
</dbReference>
<dbReference type="PANTHER" id="PTHR21403">
    <property type="entry name" value="ATP PHOSPHORIBOSYLTRANSFERASE ATP-PRTASE"/>
    <property type="match status" value="1"/>
</dbReference>
<dbReference type="Pfam" id="PF01634">
    <property type="entry name" value="HisG"/>
    <property type="match status" value="1"/>
</dbReference>
<dbReference type="Pfam" id="PF08029">
    <property type="entry name" value="HisG_C"/>
    <property type="match status" value="1"/>
</dbReference>
<dbReference type="SUPFAM" id="SSF54913">
    <property type="entry name" value="GlnB-like"/>
    <property type="match status" value="1"/>
</dbReference>
<dbReference type="SUPFAM" id="SSF53850">
    <property type="entry name" value="Periplasmic binding protein-like II"/>
    <property type="match status" value="1"/>
</dbReference>
<dbReference type="PROSITE" id="PS01316">
    <property type="entry name" value="ATP_P_PHORIBOSYLTR"/>
    <property type="match status" value="1"/>
</dbReference>
<accession>B2GGU8</accession>
<name>HIS1_KOCRD</name>